<evidence type="ECO:0000250" key="1"/>
<evidence type="ECO:0000255" key="2"/>
<evidence type="ECO:0000255" key="3">
    <source>
        <dbReference type="PROSITE-ProRule" id="PRU01240"/>
    </source>
</evidence>
<evidence type="ECO:0000256" key="4">
    <source>
        <dbReference type="SAM" id="MobiDB-lite"/>
    </source>
</evidence>
<evidence type="ECO:0000305" key="5"/>
<organism>
    <name type="scientific">Arthroderma gypseum (strain ATCC MYA-4604 / CBS 118893)</name>
    <name type="common">Microsporum gypseum</name>
    <dbReference type="NCBI Taxonomy" id="535722"/>
    <lineage>
        <taxon>Eukaryota</taxon>
        <taxon>Fungi</taxon>
        <taxon>Dikarya</taxon>
        <taxon>Ascomycota</taxon>
        <taxon>Pezizomycotina</taxon>
        <taxon>Eurotiomycetes</taxon>
        <taxon>Eurotiomycetidae</taxon>
        <taxon>Onygenales</taxon>
        <taxon>Arthrodermataceae</taxon>
        <taxon>Nannizzia</taxon>
    </lineage>
</organism>
<proteinExistence type="inferred from homology"/>
<name>SUB1_ARTGP</name>
<accession>E4UPZ4</accession>
<sequence length="481" mass="50605">MGVFRFISISLAAVSAANAAQILSMPHAQTVPNSYIVMMKDDTSDDDFNHHQSWLQSTHTHNITRRATVQNAGMRHKYNFHKMKGYSGVFDDETIKDIAKDPKVMFVEPDTIISVHGKVDQNNVPSWGLARISSSKPGTQDYTYDSSAGEGITVYSVDTGVDINHEDFEGRAIWGSNQVNDGDDNDRSGHGTHTSGTMVGKEFGIAKKAKLVAVKVLGNDGSGPTSGIVAGINWCVEHARQNGGTNKAVMNMSLGGGSSSALNRAAAQAVEQGMFLSVAAGNDNTDARSSSPASEPSVCTVGASAEDDSRSSFSNWGPSLDLFAPGSNIISARPGGGSQSMSGTSMAAPHVAGLAAYLMALEGISGGAVCDRLKQLGSASISDVGPGTPTNVLINNGGAKGDGKSPKPSPKPSHPSEPQQPTEPQQPAPGEPSTPAPAPMPPTPQHPHTPFPGGDDFDFDGFWKKYFGGEHWRKMFSSFFN</sequence>
<comment type="function">
    <text evidence="1">Secreted subtilisin-like serine protease with keratinolytic activity that contributes to pathogenicity.</text>
</comment>
<comment type="subcellular location">
    <subcellularLocation>
        <location evidence="1">Secreted</location>
    </subcellularLocation>
</comment>
<comment type="similarity">
    <text evidence="5">Belongs to the peptidase S8 family.</text>
</comment>
<protein>
    <recommendedName>
        <fullName>Subtilisin-like protease 1</fullName>
        <ecNumber>3.4.21.-</ecNumber>
    </recommendedName>
</protein>
<dbReference type="EC" id="3.4.21.-"/>
<dbReference type="EMBL" id="DS989823">
    <property type="protein sequence ID" value="EFQ99128.1"/>
    <property type="molecule type" value="Genomic_DNA"/>
</dbReference>
<dbReference type="RefSeq" id="XP_003174611.1">
    <property type="nucleotide sequence ID" value="XM_003174563.1"/>
</dbReference>
<dbReference type="SMR" id="E4UPZ4"/>
<dbReference type="STRING" id="535722.E4UPZ4"/>
<dbReference type="MEROPS" id="S08.062"/>
<dbReference type="GlyCosmos" id="E4UPZ4">
    <property type="glycosylation" value="1 site, No reported glycans"/>
</dbReference>
<dbReference type="GeneID" id="10029908"/>
<dbReference type="VEuPathDB" id="FungiDB:MGYG_02140"/>
<dbReference type="eggNOG" id="KOG1153">
    <property type="taxonomic scope" value="Eukaryota"/>
</dbReference>
<dbReference type="HOGENOM" id="CLU_011263_1_3_1"/>
<dbReference type="InParanoid" id="E4UPZ4"/>
<dbReference type="OMA" id="HTHNITR"/>
<dbReference type="OrthoDB" id="206201at2759"/>
<dbReference type="Proteomes" id="UP000002669">
    <property type="component" value="Unassembled WGS sequence"/>
</dbReference>
<dbReference type="GO" id="GO:0005576">
    <property type="term" value="C:extracellular region"/>
    <property type="evidence" value="ECO:0007669"/>
    <property type="project" value="UniProtKB-SubCell"/>
</dbReference>
<dbReference type="GO" id="GO:0004252">
    <property type="term" value="F:serine-type endopeptidase activity"/>
    <property type="evidence" value="ECO:0007669"/>
    <property type="project" value="InterPro"/>
</dbReference>
<dbReference type="GO" id="GO:0006508">
    <property type="term" value="P:proteolysis"/>
    <property type="evidence" value="ECO:0007669"/>
    <property type="project" value="UniProtKB-KW"/>
</dbReference>
<dbReference type="CDD" id="cd04077">
    <property type="entry name" value="Peptidases_S8_PCSK9_ProteinaseK_like"/>
    <property type="match status" value="1"/>
</dbReference>
<dbReference type="FunFam" id="3.40.50.200:FF:000014">
    <property type="entry name" value="Proteinase K"/>
    <property type="match status" value="1"/>
</dbReference>
<dbReference type="Gene3D" id="3.30.70.80">
    <property type="entry name" value="Peptidase S8 propeptide/proteinase inhibitor I9"/>
    <property type="match status" value="1"/>
</dbReference>
<dbReference type="Gene3D" id="3.40.50.200">
    <property type="entry name" value="Peptidase S8/S53 domain"/>
    <property type="match status" value="1"/>
</dbReference>
<dbReference type="InterPro" id="IPR034193">
    <property type="entry name" value="PCSK9_ProteinaseK-like"/>
</dbReference>
<dbReference type="InterPro" id="IPR000209">
    <property type="entry name" value="Peptidase_S8/S53_dom"/>
</dbReference>
<dbReference type="InterPro" id="IPR036852">
    <property type="entry name" value="Peptidase_S8/S53_dom_sf"/>
</dbReference>
<dbReference type="InterPro" id="IPR023828">
    <property type="entry name" value="Peptidase_S8_Ser-AS"/>
</dbReference>
<dbReference type="InterPro" id="IPR050131">
    <property type="entry name" value="Peptidase_S8_subtilisin-like"/>
</dbReference>
<dbReference type="InterPro" id="IPR015500">
    <property type="entry name" value="Peptidase_S8_subtilisin-rel"/>
</dbReference>
<dbReference type="InterPro" id="IPR010259">
    <property type="entry name" value="S8pro/Inhibitor_I9"/>
</dbReference>
<dbReference type="InterPro" id="IPR037045">
    <property type="entry name" value="S8pro/Inhibitor_I9_sf"/>
</dbReference>
<dbReference type="PANTHER" id="PTHR43806:SF58">
    <property type="entry name" value="ALKALINE PROTEASE 1-RELATED"/>
    <property type="match status" value="1"/>
</dbReference>
<dbReference type="PANTHER" id="PTHR43806">
    <property type="entry name" value="PEPTIDASE S8"/>
    <property type="match status" value="1"/>
</dbReference>
<dbReference type="Pfam" id="PF05922">
    <property type="entry name" value="Inhibitor_I9"/>
    <property type="match status" value="1"/>
</dbReference>
<dbReference type="Pfam" id="PF00082">
    <property type="entry name" value="Peptidase_S8"/>
    <property type="match status" value="1"/>
</dbReference>
<dbReference type="PRINTS" id="PR00723">
    <property type="entry name" value="SUBTILISIN"/>
</dbReference>
<dbReference type="SUPFAM" id="SSF54897">
    <property type="entry name" value="Protease propeptides/inhibitors"/>
    <property type="match status" value="1"/>
</dbReference>
<dbReference type="SUPFAM" id="SSF52743">
    <property type="entry name" value="Subtilisin-like"/>
    <property type="match status" value="1"/>
</dbReference>
<dbReference type="PROSITE" id="PS51892">
    <property type="entry name" value="SUBTILASE"/>
    <property type="match status" value="1"/>
</dbReference>
<dbReference type="PROSITE" id="PS00138">
    <property type="entry name" value="SUBTILASE_SER"/>
    <property type="match status" value="1"/>
</dbReference>
<gene>
    <name type="primary">SUB1</name>
    <name type="ORF">MGYG_02140</name>
</gene>
<keyword id="KW-0325">Glycoprotein</keyword>
<keyword id="KW-0378">Hydrolase</keyword>
<keyword id="KW-0645">Protease</keyword>
<keyword id="KW-1185">Reference proteome</keyword>
<keyword id="KW-0964">Secreted</keyword>
<keyword id="KW-0720">Serine protease</keyword>
<keyword id="KW-0732">Signal</keyword>
<keyword id="KW-0843">Virulence</keyword>
<keyword id="KW-0865">Zymogen</keyword>
<reference key="1">
    <citation type="journal article" date="2012" name="MBio">
        <title>Comparative genome analysis of Trichophyton rubrum and related dermatophytes reveals candidate genes involved in infection.</title>
        <authorList>
            <person name="Martinez D.A."/>
            <person name="Oliver B.G."/>
            <person name="Graeser Y."/>
            <person name="Goldberg J.M."/>
            <person name="Li W."/>
            <person name="Martinez-Rossi N.M."/>
            <person name="Monod M."/>
            <person name="Shelest E."/>
            <person name="Barton R.C."/>
            <person name="Birch E."/>
            <person name="Brakhage A.A."/>
            <person name="Chen Z."/>
            <person name="Gurr S.J."/>
            <person name="Heiman D."/>
            <person name="Heitman J."/>
            <person name="Kosti I."/>
            <person name="Rossi A."/>
            <person name="Saif S."/>
            <person name="Samalova M."/>
            <person name="Saunders C.W."/>
            <person name="Shea T."/>
            <person name="Summerbell R.C."/>
            <person name="Xu J."/>
            <person name="Young S."/>
            <person name="Zeng Q."/>
            <person name="Birren B.W."/>
            <person name="Cuomo C.A."/>
            <person name="White T.C."/>
        </authorList>
    </citation>
    <scope>NUCLEOTIDE SEQUENCE [LARGE SCALE GENOMIC DNA]</scope>
    <source>
        <strain>ATCC MYA-4604 / CBS 118893</strain>
    </source>
</reference>
<feature type="signal peptide" evidence="2">
    <location>
        <begin position="1"/>
        <end position="19"/>
    </location>
</feature>
<feature type="propeptide" id="PRO_0000406364" evidence="1">
    <location>
        <begin position="20"/>
        <end position="116"/>
    </location>
</feature>
<feature type="chain" id="PRO_0000406365" description="Subtilisin-like protease 1">
    <location>
        <begin position="117"/>
        <end position="481"/>
    </location>
</feature>
<feature type="domain" description="Inhibitor I9" evidence="2">
    <location>
        <begin position="34"/>
        <end position="115"/>
    </location>
</feature>
<feature type="domain" description="Peptidase S8" evidence="3">
    <location>
        <begin position="126"/>
        <end position="400"/>
    </location>
</feature>
<feature type="region of interest" description="Disordered" evidence="4">
    <location>
        <begin position="175"/>
        <end position="198"/>
    </location>
</feature>
<feature type="region of interest" description="Disordered" evidence="4">
    <location>
        <begin position="281"/>
        <end position="312"/>
    </location>
</feature>
<feature type="region of interest" description="Disordered" evidence="4">
    <location>
        <begin position="379"/>
        <end position="455"/>
    </location>
</feature>
<feature type="compositionally biased region" description="Polar residues" evidence="4">
    <location>
        <begin position="282"/>
        <end position="294"/>
    </location>
</feature>
<feature type="compositionally biased region" description="Pro residues" evidence="4">
    <location>
        <begin position="424"/>
        <end position="450"/>
    </location>
</feature>
<feature type="active site" description="Charge relay system" evidence="3">
    <location>
        <position position="158"/>
    </location>
</feature>
<feature type="active site" description="Charge relay system" evidence="3">
    <location>
        <position position="190"/>
    </location>
</feature>
<feature type="active site" description="Charge relay system" evidence="3">
    <location>
        <position position="345"/>
    </location>
</feature>
<feature type="glycosylation site" description="N-linked (GlcNAc...) asparagine" evidence="2">
    <location>
        <position position="251"/>
    </location>
</feature>